<organism>
    <name type="scientific">Artedidraco orianae</name>
    <name type="common">Barbeled plunderfish</name>
    <dbReference type="NCBI Taxonomy" id="136232"/>
    <lineage>
        <taxon>Eukaryota</taxon>
        <taxon>Metazoa</taxon>
        <taxon>Chordata</taxon>
        <taxon>Craniata</taxon>
        <taxon>Vertebrata</taxon>
        <taxon>Euteleostomi</taxon>
        <taxon>Actinopterygii</taxon>
        <taxon>Neopterygii</taxon>
        <taxon>Teleostei</taxon>
        <taxon>Neoteleostei</taxon>
        <taxon>Acanthomorphata</taxon>
        <taxon>Eupercaria</taxon>
        <taxon>Perciformes</taxon>
        <taxon>Notothenioidei</taxon>
        <taxon>Artedidraco</taxon>
    </lineage>
</organism>
<feature type="initiator methionine" description="Removed" evidence="1">
    <location>
        <position position="1"/>
    </location>
</feature>
<feature type="chain" id="PRO_0000260296" description="Hemoglobin subunit alpha">
    <location>
        <begin position="2"/>
        <end position="143"/>
    </location>
</feature>
<feature type="domain" description="Globin" evidence="2">
    <location>
        <begin position="2"/>
        <end position="143"/>
    </location>
</feature>
<feature type="binding site" evidence="2">
    <location>
        <position position="60"/>
    </location>
    <ligand>
        <name>O2</name>
        <dbReference type="ChEBI" id="CHEBI:15379"/>
    </ligand>
</feature>
<feature type="binding site" description="proximal binding residue" evidence="2">
    <location>
        <position position="89"/>
    </location>
    <ligand>
        <name>heme b</name>
        <dbReference type="ChEBI" id="CHEBI:60344"/>
    </ligand>
    <ligandPart>
        <name>Fe</name>
        <dbReference type="ChEBI" id="CHEBI:18248"/>
    </ligandPart>
</feature>
<feature type="modified residue" description="N-acetylserine" evidence="3">
    <location>
        <position position="2"/>
    </location>
</feature>
<proteinExistence type="evidence at protein level"/>
<accession>P0C237</accession>
<name>HBA_ARTOR</name>
<evidence type="ECO:0000250" key="1"/>
<evidence type="ECO:0000255" key="2">
    <source>
        <dbReference type="PROSITE-ProRule" id="PRU00238"/>
    </source>
</evidence>
<evidence type="ECO:0000269" key="3">
    <source>
    </source>
</evidence>
<keyword id="KW-0007">Acetylation</keyword>
<keyword id="KW-0903">Direct protein sequencing</keyword>
<keyword id="KW-0349">Heme</keyword>
<keyword id="KW-0408">Iron</keyword>
<keyword id="KW-0479">Metal-binding</keyword>
<keyword id="KW-0561">Oxygen transport</keyword>
<keyword id="KW-0813">Transport</keyword>
<reference key="1">
    <citation type="journal article" date="1998" name="J. Biol. Chem.">
        <title>The hemoglobins of the antarctic fishes Atedidraco orianae and Pogonophryne scotti. Amino acid sequence, lack of cooperativity, and ligand binding properties.</title>
        <authorList>
            <person name="Tamburrini M."/>
            <person name="Romano M."/>
            <person name="Carratore V."/>
            <person name="Kunzmann A."/>
            <person name="Coletta M."/>
            <person name="di Prisco G."/>
        </authorList>
    </citation>
    <scope>PROTEIN SEQUENCE OF 2-143</scope>
    <scope>ACETYLATION AT SER-2</scope>
</reference>
<dbReference type="SMR" id="P0C237"/>
<dbReference type="iPTMnet" id="P0C237"/>
<dbReference type="GO" id="GO:0072562">
    <property type="term" value="C:blood microparticle"/>
    <property type="evidence" value="ECO:0007669"/>
    <property type="project" value="TreeGrafter"/>
</dbReference>
<dbReference type="GO" id="GO:0031838">
    <property type="term" value="C:haptoglobin-hemoglobin complex"/>
    <property type="evidence" value="ECO:0007669"/>
    <property type="project" value="TreeGrafter"/>
</dbReference>
<dbReference type="GO" id="GO:0005833">
    <property type="term" value="C:hemoglobin complex"/>
    <property type="evidence" value="ECO:0007669"/>
    <property type="project" value="InterPro"/>
</dbReference>
<dbReference type="GO" id="GO:0031720">
    <property type="term" value="F:haptoglobin binding"/>
    <property type="evidence" value="ECO:0007669"/>
    <property type="project" value="TreeGrafter"/>
</dbReference>
<dbReference type="GO" id="GO:0020037">
    <property type="term" value="F:heme binding"/>
    <property type="evidence" value="ECO:0007669"/>
    <property type="project" value="InterPro"/>
</dbReference>
<dbReference type="GO" id="GO:0005506">
    <property type="term" value="F:iron ion binding"/>
    <property type="evidence" value="ECO:0007669"/>
    <property type="project" value="InterPro"/>
</dbReference>
<dbReference type="GO" id="GO:0043177">
    <property type="term" value="F:organic acid binding"/>
    <property type="evidence" value="ECO:0007669"/>
    <property type="project" value="TreeGrafter"/>
</dbReference>
<dbReference type="GO" id="GO:0019825">
    <property type="term" value="F:oxygen binding"/>
    <property type="evidence" value="ECO:0007669"/>
    <property type="project" value="InterPro"/>
</dbReference>
<dbReference type="GO" id="GO:0005344">
    <property type="term" value="F:oxygen carrier activity"/>
    <property type="evidence" value="ECO:0007669"/>
    <property type="project" value="UniProtKB-KW"/>
</dbReference>
<dbReference type="GO" id="GO:0004601">
    <property type="term" value="F:peroxidase activity"/>
    <property type="evidence" value="ECO:0007669"/>
    <property type="project" value="TreeGrafter"/>
</dbReference>
<dbReference type="GO" id="GO:0042744">
    <property type="term" value="P:hydrogen peroxide catabolic process"/>
    <property type="evidence" value="ECO:0007669"/>
    <property type="project" value="TreeGrafter"/>
</dbReference>
<dbReference type="CDD" id="cd08927">
    <property type="entry name" value="Hb-alpha-like"/>
    <property type="match status" value="1"/>
</dbReference>
<dbReference type="FunFam" id="1.10.490.10:FF:000002">
    <property type="entry name" value="Hemoglobin subunit alpha"/>
    <property type="match status" value="1"/>
</dbReference>
<dbReference type="Gene3D" id="1.10.490.10">
    <property type="entry name" value="Globins"/>
    <property type="match status" value="1"/>
</dbReference>
<dbReference type="InterPro" id="IPR000971">
    <property type="entry name" value="Globin"/>
</dbReference>
<dbReference type="InterPro" id="IPR009050">
    <property type="entry name" value="Globin-like_sf"/>
</dbReference>
<dbReference type="InterPro" id="IPR012292">
    <property type="entry name" value="Globin/Proto"/>
</dbReference>
<dbReference type="InterPro" id="IPR002338">
    <property type="entry name" value="Hemoglobin_a-typ"/>
</dbReference>
<dbReference type="InterPro" id="IPR050056">
    <property type="entry name" value="Hemoglobin_oxygen_transport"/>
</dbReference>
<dbReference type="InterPro" id="IPR002339">
    <property type="entry name" value="Hemoglobin_pi"/>
</dbReference>
<dbReference type="PANTHER" id="PTHR11442">
    <property type="entry name" value="HEMOGLOBIN FAMILY MEMBER"/>
    <property type="match status" value="1"/>
</dbReference>
<dbReference type="PANTHER" id="PTHR11442:SF41">
    <property type="entry name" value="HEMOGLOBIN SUBUNIT ZETA"/>
    <property type="match status" value="1"/>
</dbReference>
<dbReference type="Pfam" id="PF00042">
    <property type="entry name" value="Globin"/>
    <property type="match status" value="1"/>
</dbReference>
<dbReference type="PRINTS" id="PR00612">
    <property type="entry name" value="ALPHAHAEM"/>
</dbReference>
<dbReference type="PRINTS" id="PR00815">
    <property type="entry name" value="PIHAEM"/>
</dbReference>
<dbReference type="SUPFAM" id="SSF46458">
    <property type="entry name" value="Globin-like"/>
    <property type="match status" value="1"/>
</dbReference>
<dbReference type="PROSITE" id="PS01033">
    <property type="entry name" value="GLOBIN"/>
    <property type="match status" value="1"/>
</dbReference>
<sequence>MSLSDKDKAAVKALWSKIAKSADVIGNDAVSRMIVVYPQTKTYFAHWPDLTPGSTNIKAHGKKVMGGIALAVSKIDDLKAGLSDLSEQHAFKLRVDPANFKILNHCIMVVISSMFPKDFTPEAHISLDKFLSAVALALAEKYR</sequence>
<protein>
    <recommendedName>
        <fullName>Hemoglobin subunit alpha</fullName>
    </recommendedName>
    <alternativeName>
        <fullName>Alpha-globin</fullName>
    </alternativeName>
    <alternativeName>
        <fullName>Hemoglobin alpha chain</fullName>
    </alternativeName>
</protein>
<comment type="function">
    <text>Involved in oxygen transport from the lung to the various peripheral tissues.</text>
</comment>
<comment type="subunit">
    <text>Heterotetramer of two alpha chains and two beta chains.</text>
</comment>
<comment type="tissue specificity">
    <text>Red blood cells.</text>
</comment>
<comment type="similarity">
    <text evidence="2">Belongs to the globin family.</text>
</comment>
<gene>
    <name type="primary">hba</name>
</gene>